<dbReference type="EMBL" id="CP000095">
    <property type="protein sequence ID" value="AAZ58262.1"/>
    <property type="molecule type" value="Genomic_DNA"/>
</dbReference>
<dbReference type="RefSeq" id="WP_011294859.1">
    <property type="nucleotide sequence ID" value="NC_007335.2"/>
</dbReference>
<dbReference type="SMR" id="Q46JR6"/>
<dbReference type="STRING" id="59920.PMN2A_0771"/>
<dbReference type="KEGG" id="pmn:PMN2A_0771"/>
<dbReference type="HOGENOM" id="CLU_019250_2_2_3"/>
<dbReference type="OrthoDB" id="9808302at2"/>
<dbReference type="PhylomeDB" id="Q46JR6"/>
<dbReference type="UniPathway" id="UPA00148"/>
<dbReference type="Proteomes" id="UP000002535">
    <property type="component" value="Chromosome"/>
</dbReference>
<dbReference type="GO" id="GO:0015420">
    <property type="term" value="F:ABC-type vitamin B12 transporter activity"/>
    <property type="evidence" value="ECO:0007669"/>
    <property type="project" value="UniProtKB-UniRule"/>
</dbReference>
<dbReference type="GO" id="GO:0003824">
    <property type="term" value="F:catalytic activity"/>
    <property type="evidence" value="ECO:0007669"/>
    <property type="project" value="InterPro"/>
</dbReference>
<dbReference type="GO" id="GO:0009236">
    <property type="term" value="P:cobalamin biosynthetic process"/>
    <property type="evidence" value="ECO:0007669"/>
    <property type="project" value="UniProtKB-UniRule"/>
</dbReference>
<dbReference type="CDD" id="cd01750">
    <property type="entry name" value="GATase1_CobQ"/>
    <property type="match status" value="1"/>
</dbReference>
<dbReference type="Gene3D" id="3.40.50.880">
    <property type="match status" value="1"/>
</dbReference>
<dbReference type="Gene3D" id="3.40.50.300">
    <property type="entry name" value="P-loop containing nucleotide triphosphate hydrolases"/>
    <property type="match status" value="1"/>
</dbReference>
<dbReference type="HAMAP" id="MF_00028">
    <property type="entry name" value="CobQ"/>
    <property type="match status" value="1"/>
</dbReference>
<dbReference type="InterPro" id="IPR029062">
    <property type="entry name" value="Class_I_gatase-like"/>
</dbReference>
<dbReference type="InterPro" id="IPR002586">
    <property type="entry name" value="CobQ/CobB/MinD/ParA_Nub-bd_dom"/>
</dbReference>
<dbReference type="InterPro" id="IPR033949">
    <property type="entry name" value="CobQ_GATase1"/>
</dbReference>
<dbReference type="InterPro" id="IPR004459">
    <property type="entry name" value="CobQ_synth"/>
</dbReference>
<dbReference type="InterPro" id="IPR011698">
    <property type="entry name" value="GATase_3"/>
</dbReference>
<dbReference type="InterPro" id="IPR027417">
    <property type="entry name" value="P-loop_NTPase"/>
</dbReference>
<dbReference type="NCBIfam" id="TIGR00313">
    <property type="entry name" value="cobQ"/>
    <property type="match status" value="1"/>
</dbReference>
<dbReference type="NCBIfam" id="NF001989">
    <property type="entry name" value="PRK00784.1"/>
    <property type="match status" value="1"/>
</dbReference>
<dbReference type="PANTHER" id="PTHR21343:SF1">
    <property type="entry name" value="COBYRIC ACID SYNTHASE"/>
    <property type="match status" value="1"/>
</dbReference>
<dbReference type="PANTHER" id="PTHR21343">
    <property type="entry name" value="DETHIOBIOTIN SYNTHETASE"/>
    <property type="match status" value="1"/>
</dbReference>
<dbReference type="Pfam" id="PF01656">
    <property type="entry name" value="CbiA"/>
    <property type="match status" value="1"/>
</dbReference>
<dbReference type="Pfam" id="PF07685">
    <property type="entry name" value="GATase_3"/>
    <property type="match status" value="1"/>
</dbReference>
<dbReference type="SUPFAM" id="SSF52317">
    <property type="entry name" value="Class I glutamine amidotransferase-like"/>
    <property type="match status" value="1"/>
</dbReference>
<dbReference type="SUPFAM" id="SSF52540">
    <property type="entry name" value="P-loop containing nucleoside triphosphate hydrolases"/>
    <property type="match status" value="1"/>
</dbReference>
<dbReference type="PROSITE" id="PS51274">
    <property type="entry name" value="GATASE_COBBQ"/>
    <property type="match status" value="1"/>
</dbReference>
<name>COBQ_PROMT</name>
<reference key="1">
    <citation type="journal article" date="2007" name="PLoS Genet.">
        <title>Patterns and implications of gene gain and loss in the evolution of Prochlorococcus.</title>
        <authorList>
            <person name="Kettler G.C."/>
            <person name="Martiny A.C."/>
            <person name="Huang K."/>
            <person name="Zucker J."/>
            <person name="Coleman M.L."/>
            <person name="Rodrigue S."/>
            <person name="Chen F."/>
            <person name="Lapidus A."/>
            <person name="Ferriera S."/>
            <person name="Johnson J."/>
            <person name="Steglich C."/>
            <person name="Church G.M."/>
            <person name="Richardson P."/>
            <person name="Chisholm S.W."/>
        </authorList>
    </citation>
    <scope>NUCLEOTIDE SEQUENCE [LARGE SCALE GENOMIC DNA]</scope>
    <source>
        <strain>NATL2A</strain>
    </source>
</reference>
<comment type="function">
    <text evidence="1">Catalyzes amidations at positions B, D, E, and G on adenosylcobyrinic A,C-diamide. NH(2) groups are provided by glutamine, and one molecule of ATP is hydrogenolyzed for each amidation.</text>
</comment>
<comment type="pathway">
    <text evidence="1">Cofactor biosynthesis; adenosylcobalamin biosynthesis.</text>
</comment>
<comment type="similarity">
    <text evidence="1">Belongs to the CobB/CobQ family. CobQ subfamily.</text>
</comment>
<protein>
    <recommendedName>
        <fullName evidence="1">Cobyric acid synthase</fullName>
    </recommendedName>
</protein>
<keyword id="KW-0169">Cobalamin biosynthesis</keyword>
<keyword id="KW-0315">Glutamine amidotransferase</keyword>
<keyword id="KW-1185">Reference proteome</keyword>
<accession>Q46JR6</accession>
<gene>
    <name evidence="1" type="primary">cobQ</name>
    <name type="ordered locus">PMN2A_0771</name>
</gene>
<organism>
    <name type="scientific">Prochlorococcus marinus (strain NATL2A)</name>
    <dbReference type="NCBI Taxonomy" id="59920"/>
    <lineage>
        <taxon>Bacteria</taxon>
        <taxon>Bacillati</taxon>
        <taxon>Cyanobacteriota</taxon>
        <taxon>Cyanophyceae</taxon>
        <taxon>Synechococcales</taxon>
        <taxon>Prochlorococcaceae</taxon>
        <taxon>Prochlorococcus</taxon>
    </lineage>
</organism>
<proteinExistence type="inferred from homology"/>
<evidence type="ECO:0000255" key="1">
    <source>
        <dbReference type="HAMAP-Rule" id="MF_00028"/>
    </source>
</evidence>
<feature type="chain" id="PRO_0000332365" description="Cobyric acid synthase">
    <location>
        <begin position="1"/>
        <end position="504"/>
    </location>
</feature>
<feature type="domain" description="GATase cobBQ-type" evidence="1">
    <location>
        <begin position="258"/>
        <end position="454"/>
    </location>
</feature>
<feature type="active site" description="Nucleophile" evidence="1">
    <location>
        <position position="339"/>
    </location>
</feature>
<feature type="active site" evidence="1">
    <location>
        <position position="446"/>
    </location>
</feature>
<sequence>MNIDLKRTPLMVLGTSSGAGKTLIATAICRCLKRKGEQPIPFKGQNMSNNAWVDTKGREMAYSQALQSWSAGLEPSAEMNPVLLKPKGDCTSEVIHLGKSVGTSRAINYYEDWFDSGWEAIKKGLAILLKSKTDGRLILEGAGSPVEVNLQHKDLTNLKLAKYLNANCILVADIERGGVFAQIIGTIALMKPDEKKLIKGIIINRFRGDKALFETGVTWIEKETGIPVLGILPWLKEIFPPEDSLDLLERKQINQGAEIEIAIIKLPRISNFSDLDPFFSDSSIQMRWIEPGQELGEPDVLIIPGSKQTIKDLESLNKTGLSNQIKNYAKKGGNIFGICGGLQMLGKSLEDPHQQESINETSTSSNMGMNLLPIKTTFREIKHTSQREEKVSWPFSQNIKGFEMHYGESDLINNKDSEIISLFKNSSLGWVIEKKDKSFVGGTYLHGIFENDEWRRQWINKIRQKKGLNHLKIDEENNSDKRERLLDLLTDAFEKNINIDILIK</sequence>